<protein>
    <recommendedName>
        <fullName>Sperm-specific class P protein 19</fullName>
    </recommendedName>
</protein>
<organism>
    <name type="scientific">Caenorhabditis elegans</name>
    <dbReference type="NCBI Taxonomy" id="6239"/>
    <lineage>
        <taxon>Eukaryota</taxon>
        <taxon>Metazoa</taxon>
        <taxon>Ecdysozoa</taxon>
        <taxon>Nematoda</taxon>
        <taxon>Chromadorea</taxon>
        <taxon>Rhabditida</taxon>
        <taxon>Rhabditina</taxon>
        <taxon>Rhabditomorpha</taxon>
        <taxon>Rhabditoidea</taxon>
        <taxon>Rhabditidae</taxon>
        <taxon>Peloderinae</taxon>
        <taxon>Caenorhabditis</taxon>
    </lineage>
</organism>
<reference key="1">
    <citation type="journal article" date="1998" name="Science">
        <title>Genome sequence of the nematode C. elegans: a platform for investigating biology.</title>
        <authorList>
            <consortium name="The C. elegans sequencing consortium"/>
        </authorList>
    </citation>
    <scope>NUCLEOTIDE SEQUENCE [LARGE SCALE GENOMIC DNA]</scope>
    <source>
        <strain>Bristol N2</strain>
    </source>
</reference>
<reference key="2">
    <citation type="journal article" date="2004" name="Mol. Biochem. Parasitol.">
        <title>MSP domain proteins show enhanced expression in male germ line cells.</title>
        <authorList>
            <person name="Tarr D.E.K."/>
            <person name="Scott A.L."/>
        </authorList>
    </citation>
    <scope>TISSUE SPECIFICITY</scope>
</reference>
<reference key="3">
    <citation type="journal article" date="2004" name="Acta Crystallogr. D">
        <title>Structure of sperm-specific protein SSP-19 from Caenorhabditis elegans.</title>
        <authorList>
            <person name="Schormann N."/>
            <person name="Symersky J."/>
            <person name="Luo M."/>
        </authorList>
    </citation>
    <scope>X-RAY CRYSTALLOGRAPHY (2.0 ANGSTROMS)</scope>
    <scope>SUBUNIT</scope>
</reference>
<name>SSP19_CAEEL</name>
<comment type="subunit">
    <text evidence="3">Monomer.</text>
</comment>
<comment type="tissue specificity">
    <text evidence="2">Expressed at higher level in testis.</text>
</comment>
<evidence type="ECO:0000255" key="1">
    <source>
        <dbReference type="PROSITE-ProRule" id="PRU00132"/>
    </source>
</evidence>
<evidence type="ECO:0000269" key="2">
    <source>
    </source>
</evidence>
<evidence type="ECO:0000269" key="3">
    <source>
    </source>
</evidence>
<evidence type="ECO:0007829" key="4">
    <source>
        <dbReference type="PDB" id="1ROW"/>
    </source>
</evidence>
<gene>
    <name type="primary">ssp-19</name>
    <name type="ORF">C55C2.2</name>
</gene>
<proteinExistence type="evidence at protein level"/>
<accession>O01829</accession>
<dbReference type="EMBL" id="FO080961">
    <property type="protein sequence ID" value="CCD68120.1"/>
    <property type="molecule type" value="Genomic_DNA"/>
</dbReference>
<dbReference type="PIR" id="T15224">
    <property type="entry name" value="T15224"/>
</dbReference>
<dbReference type="RefSeq" id="NP_491000.1">
    <property type="nucleotide sequence ID" value="NM_058599.5"/>
</dbReference>
<dbReference type="PDB" id="1ROW">
    <property type="method" value="X-ray"/>
    <property type="resolution" value="2.00 A"/>
    <property type="chains" value="A/B=1-109"/>
</dbReference>
<dbReference type="PDBsum" id="1ROW"/>
<dbReference type="SMR" id="O01829"/>
<dbReference type="STRING" id="6239.C55C2.2.1"/>
<dbReference type="PaxDb" id="6239-C55C2.2"/>
<dbReference type="PeptideAtlas" id="O01829"/>
<dbReference type="EnsemblMetazoa" id="C55C2.2.1">
    <property type="protein sequence ID" value="C55C2.2.1"/>
    <property type="gene ID" value="WBGene00006047"/>
</dbReference>
<dbReference type="GeneID" id="171813"/>
<dbReference type="KEGG" id="cel:CELE_C55C2.2"/>
<dbReference type="UCSC" id="C55C2.2">
    <property type="organism name" value="c. elegans"/>
</dbReference>
<dbReference type="AGR" id="WB:WBGene00006047"/>
<dbReference type="CTD" id="171813"/>
<dbReference type="WormBase" id="C55C2.2">
    <property type="protein sequence ID" value="CE09025"/>
    <property type="gene ID" value="WBGene00006047"/>
    <property type="gene designation" value="ssp-19"/>
</dbReference>
<dbReference type="eggNOG" id="ENOG502SQPZ">
    <property type="taxonomic scope" value="Eukaryota"/>
</dbReference>
<dbReference type="GeneTree" id="ENSGT00970000195880"/>
<dbReference type="HOGENOM" id="CLU_147608_1_0_1"/>
<dbReference type="InParanoid" id="O01829"/>
<dbReference type="OMA" id="IDPPVAC"/>
<dbReference type="OrthoDB" id="264603at2759"/>
<dbReference type="PhylomeDB" id="O01829"/>
<dbReference type="EvolutionaryTrace" id="O01829"/>
<dbReference type="PRO" id="PR:O01829"/>
<dbReference type="Proteomes" id="UP000001940">
    <property type="component" value="Chromosome I"/>
</dbReference>
<dbReference type="Bgee" id="WBGene00006047">
    <property type="expression patterns" value="Expressed in gonad and 4 other cell types or tissues"/>
</dbReference>
<dbReference type="GO" id="GO:0042803">
    <property type="term" value="F:protein homodimerization activity"/>
    <property type="evidence" value="ECO:0000353"/>
    <property type="project" value="WormBase"/>
</dbReference>
<dbReference type="FunFam" id="2.60.40.10:FF:002024">
    <property type="entry name" value="Sperm-specific class P protein 19"/>
    <property type="match status" value="1"/>
</dbReference>
<dbReference type="Gene3D" id="2.60.40.10">
    <property type="entry name" value="Immunoglobulins"/>
    <property type="match status" value="1"/>
</dbReference>
<dbReference type="InterPro" id="IPR013783">
    <property type="entry name" value="Ig-like_fold"/>
</dbReference>
<dbReference type="InterPro" id="IPR000535">
    <property type="entry name" value="MSP_dom"/>
</dbReference>
<dbReference type="InterPro" id="IPR008962">
    <property type="entry name" value="PapD-like_sf"/>
</dbReference>
<dbReference type="InterPro" id="IPR051774">
    <property type="entry name" value="Sperm-specific_class_P"/>
</dbReference>
<dbReference type="PANTHER" id="PTHR22947">
    <property type="entry name" value="MAJOR SPERM PROTEIN"/>
    <property type="match status" value="1"/>
</dbReference>
<dbReference type="PANTHER" id="PTHR22947:SF7">
    <property type="entry name" value="MSP DOMAIN-CONTAINING PROTEIN-RELATED"/>
    <property type="match status" value="1"/>
</dbReference>
<dbReference type="Pfam" id="PF00635">
    <property type="entry name" value="Motile_Sperm"/>
    <property type="match status" value="1"/>
</dbReference>
<dbReference type="SUPFAM" id="SSF49354">
    <property type="entry name" value="PapD-like"/>
    <property type="match status" value="1"/>
</dbReference>
<dbReference type="PROSITE" id="PS50202">
    <property type="entry name" value="MSP"/>
    <property type="match status" value="1"/>
</dbReference>
<feature type="chain" id="PRO_0000213450" description="Sperm-specific class P protein 19">
    <location>
        <begin position="1"/>
        <end position="109"/>
    </location>
</feature>
<feature type="domain" description="MSP" evidence="1">
    <location>
        <begin position="1"/>
        <end position="109"/>
    </location>
</feature>
<feature type="strand" evidence="4">
    <location>
        <begin position="4"/>
        <end position="13"/>
    </location>
</feature>
<feature type="strand" evidence="4">
    <location>
        <begin position="17"/>
        <end position="25"/>
    </location>
</feature>
<feature type="strand" evidence="4">
    <location>
        <begin position="27"/>
        <end position="29"/>
    </location>
</feature>
<feature type="strand" evidence="4">
    <location>
        <begin position="31"/>
        <end position="38"/>
    </location>
</feature>
<feature type="strand" evidence="4">
    <location>
        <begin position="40"/>
        <end position="46"/>
    </location>
</feature>
<feature type="strand" evidence="4">
    <location>
        <begin position="48"/>
        <end position="52"/>
    </location>
</feature>
<feature type="strand" evidence="4">
    <location>
        <begin position="56"/>
        <end position="64"/>
    </location>
</feature>
<feature type="strand" evidence="4">
    <location>
        <begin position="70"/>
        <end position="80"/>
    </location>
</feature>
<feature type="helix" evidence="4">
    <location>
        <begin position="88"/>
        <end position="92"/>
    </location>
</feature>
<feature type="strand" evidence="4">
    <location>
        <begin position="99"/>
        <end position="108"/>
    </location>
</feature>
<keyword id="KW-0002">3D-structure</keyword>
<keyword id="KW-1185">Reference proteome</keyword>
<sequence>MSLTADPPACTVPAAGVSSTHKLVNGGAEKIVFKIKSSNNNEYRIAPVFGFVDPSGSKDVVITRTAGAPKEDKLVVHFASAPADATDAQAAFVAVAPAGTVTIPMSATA</sequence>